<comment type="function">
    <text>Involved in oxygen transport from the lung to the various peripheral tissues.</text>
</comment>
<comment type="subunit">
    <text>Heterotetramer of two alpha chains and two beta chains.</text>
</comment>
<comment type="tissue specificity">
    <text>Red blood cells.</text>
</comment>
<comment type="polymorphism">
    <text evidence="6">In rats there are two non-allelic alpha chains and two non-allelic beta chains.</text>
</comment>
<comment type="similarity">
    <text evidence="4">Belongs to the globin family.</text>
</comment>
<accession>P11517</accession>
<organism>
    <name type="scientific">Rattus norvegicus</name>
    <name type="common">Rat</name>
    <dbReference type="NCBI Taxonomy" id="10116"/>
    <lineage>
        <taxon>Eukaryota</taxon>
        <taxon>Metazoa</taxon>
        <taxon>Chordata</taxon>
        <taxon>Craniata</taxon>
        <taxon>Vertebrata</taxon>
        <taxon>Euteleostomi</taxon>
        <taxon>Mammalia</taxon>
        <taxon>Eutheria</taxon>
        <taxon>Euarchontoglires</taxon>
        <taxon>Glires</taxon>
        <taxon>Rodentia</taxon>
        <taxon>Myomorpha</taxon>
        <taxon>Muroidea</taxon>
        <taxon>Muridae</taxon>
        <taxon>Murinae</taxon>
        <taxon>Rattus</taxon>
    </lineage>
</organism>
<protein>
    <recommendedName>
        <fullName>Hemoglobin subunit beta-2</fullName>
    </recommendedName>
    <alternativeName>
        <fullName>Beta-2-globin</fullName>
    </alternativeName>
    <alternativeName>
        <fullName>Hemoglobin beta chain, minor-form</fullName>
    </alternativeName>
    <alternativeName>
        <fullName>Hemoglobin beta-2 chain</fullName>
    </alternativeName>
</protein>
<feature type="initiator methionine" description="Removed" evidence="1 5">
    <location>
        <position position="1"/>
    </location>
</feature>
<feature type="chain" id="PRO_0000053091" description="Hemoglobin subunit beta-2">
    <location>
        <begin position="2"/>
        <end position="147"/>
    </location>
</feature>
<feature type="domain" description="Globin" evidence="4">
    <location>
        <begin position="3"/>
        <end position="147"/>
    </location>
</feature>
<feature type="binding site" description="distal binding residue">
    <location>
        <position position="64"/>
    </location>
    <ligand>
        <name>heme b</name>
        <dbReference type="ChEBI" id="CHEBI:60344"/>
    </ligand>
    <ligandPart>
        <name>Fe</name>
        <dbReference type="ChEBI" id="CHEBI:18248"/>
    </ligandPart>
</feature>
<feature type="binding site" description="proximal binding residue">
    <location>
        <position position="93"/>
    </location>
    <ligand>
        <name>heme b</name>
        <dbReference type="ChEBI" id="CHEBI:60344"/>
    </ligand>
    <ligandPart>
        <name>Fe</name>
        <dbReference type="ChEBI" id="CHEBI:18248"/>
    </ligandPart>
</feature>
<feature type="modified residue" description="N-acetylvaline" evidence="1">
    <location>
        <position position="2"/>
    </location>
</feature>
<feature type="modified residue" description="Phosphoserine" evidence="7">
    <location>
        <position position="13"/>
    </location>
</feature>
<feature type="modified residue" description="N6-succinyllysine" evidence="2">
    <location>
        <position position="18"/>
    </location>
</feature>
<feature type="modified residue" description="Phosphoserine" evidence="3">
    <location>
        <position position="51"/>
    </location>
</feature>
<feature type="modified residue" description="Phosphoserine" evidence="7">
    <location>
        <position position="53"/>
    </location>
</feature>
<feature type="modified residue" description="Asymmetric dimethylarginine" evidence="2">
    <location>
        <position position="105"/>
    </location>
</feature>
<feature type="modified residue" description="Phosphothreonine" evidence="7">
    <location>
        <position position="124"/>
    </location>
</feature>
<feature type="modified residue" description="Phosphoserine; in variant Ser-126" evidence="7">
    <location>
        <position position="126"/>
    </location>
</feature>
<feature type="sequence variant" description="In strain: Sprague-Dawley.">
    <original>A</original>
    <variation>P</variation>
    <location>
        <position position="21"/>
    </location>
</feature>
<feature type="sequence variant" description="In strain: Sprague-Dawley." evidence="7">
    <original>C</original>
    <variation>S</variation>
    <location>
        <position position="126"/>
    </location>
</feature>
<reference key="1">
    <citation type="journal article" date="1987" name="Nucleic Acids Res.">
        <title>Sequence of the rat beta-globin mRNA.</title>
        <authorList>
            <person name="Ohshita Y."/>
            <person name="Hozumi T."/>
        </authorList>
    </citation>
    <scope>NUCLEOTIDE SEQUENCE [MRNA]</scope>
</reference>
<reference key="2">
    <citation type="journal article" date="1989" name="Nucleic Acids Res.">
        <title>Genomic sequence of rat beta-globin minor gene.</title>
        <authorList>
            <person name="Stevanovic M."/>
            <person name="Crkvenjakov R."/>
        </authorList>
    </citation>
    <scope>NUCLEOTIDE SEQUENCE [GENOMIC DNA]</scope>
    <source>
        <strain>Wistar</strain>
    </source>
</reference>
<reference key="3">
    <citation type="journal article" date="1988" name="Nucleic Acids Res.">
        <title>Genomic sequence of a Sprague-Dawley rat beta-globin gene.</title>
        <authorList>
            <person name="Wong W.M."/>
            <person name="Lam V.M.S."/>
            <person name="Cheng L.Y.L."/>
            <person name="Tam J.W.O."/>
        </authorList>
    </citation>
    <scope>NUCLEOTIDE SEQUENCE [GENOMIC DNA]</scope>
    <source>
        <strain>Sprague-Dawley</strain>
    </source>
</reference>
<reference key="4">
    <citation type="journal article" date="1989" name="Nucleic Acids Res.">
        <title>cDNA sequences of two beta-globin genes in a Sprague-Dawley rat.</title>
        <authorList>
            <person name="Woo C."/>
            <person name="Lam V.M.S."/>
            <person name="Tam J.W.O."/>
        </authorList>
    </citation>
    <scope>NUCLEOTIDE SEQUENCE [MRNA]</scope>
    <source>
        <strain>Sprague-Dawley</strain>
    </source>
</reference>
<reference key="5">
    <citation type="submission" date="1992-07" db="EMBL/GenBank/DDBJ databases">
        <authorList>
            <person name="Inokuchi N."/>
            <person name="Iwahara S."/>
            <person name="Satoh H."/>
            <person name="Nagoe Y."/>
            <person name="Okazaki T."/>
        </authorList>
    </citation>
    <scope>NUCLEOTIDE SEQUENCE</scope>
    <source>
        <strain>Wistar</strain>
        <tissue>Liver</tissue>
    </source>
</reference>
<reference key="6">
    <citation type="submission" date="2007-07" db="UniProtKB">
        <authorList>
            <person name="Lubec G."/>
            <person name="Afjehi-Sadat L."/>
            <person name="Kang S.U."/>
        </authorList>
    </citation>
    <scope>PROTEIN SEQUENCE OF 2-18; 32-41; 46-62; 67-145; 84-96 AND 106-121</scope>
    <scope>IDENTIFICATION BY MASS SPECTROMETRY</scope>
    <source>
        <strain>Sprague-Dawley</strain>
        <tissue>Brain</tissue>
        <tissue>Spinal cord</tissue>
    </source>
</reference>
<reference key="7">
    <citation type="journal article" date="2012" name="Nat. Commun.">
        <title>Quantitative maps of protein phosphorylation sites across 14 different rat organs and tissues.</title>
        <authorList>
            <person name="Lundby A."/>
            <person name="Secher A."/>
            <person name="Lage K."/>
            <person name="Nordsborg N.B."/>
            <person name="Dmytriyev A."/>
            <person name="Lundby C."/>
            <person name="Olsen J.V."/>
        </authorList>
    </citation>
    <scope>PHOSPHORYLATION [LARGE SCALE ANALYSIS] AT SER-13; SER-53 AND THR-124</scope>
    <scope>PHOSPHORYLATION [LARGE SCALE ANALYSIS] AT SER-126 (VARIANT SER-126)</scope>
    <scope>VARIANT [LARGE SCALE ANALYSIS] SER-126</scope>
    <scope>IDENTIFICATION BY MASS SPECTROMETRY [LARGE SCALE ANALYSIS]</scope>
</reference>
<proteinExistence type="evidence at protein level"/>
<keyword id="KW-0007">Acetylation</keyword>
<keyword id="KW-0903">Direct protein sequencing</keyword>
<keyword id="KW-0349">Heme</keyword>
<keyword id="KW-0408">Iron</keyword>
<keyword id="KW-0479">Metal-binding</keyword>
<keyword id="KW-0488">Methylation</keyword>
<keyword id="KW-0561">Oxygen transport</keyword>
<keyword id="KW-0597">Phosphoprotein</keyword>
<keyword id="KW-1185">Reference proteome</keyword>
<keyword id="KW-0813">Transport</keyword>
<sequence>MVHLTDAEKATVSGLWGKVNADNVGAEALGRLLVVYPWTQRYFSKFGDLSSASAIMGNPQVKAHGKKVINAFNDGLKHLDNLKGTFAHLSELHCDKLHVDPENFRLLGNMIVIVLGHHLGKEFTPCAQAAFQKVVAGVASALAHKYH</sequence>
<dbReference type="EMBL" id="X67616">
    <property type="protein sequence ID" value="CAA47876.1"/>
    <property type="molecule type" value="Genomic_DNA"/>
</dbReference>
<dbReference type="EMBL" id="X15160">
    <property type="protein sequence ID" value="CAA33250.1"/>
    <property type="molecule type" value="Genomic_DNA"/>
</dbReference>
<dbReference type="EMBL" id="X05080">
    <property type="protein sequence ID" value="CAA28738.1"/>
    <property type="molecule type" value="mRNA"/>
</dbReference>
<dbReference type="EMBL" id="X06701">
    <property type="protein sequence ID" value="CAA29887.1"/>
    <property type="molecule type" value="Genomic_DNA"/>
</dbReference>
<dbReference type="EMBL" id="X16418">
    <property type="protein sequence ID" value="CAA34440.1"/>
    <property type="molecule type" value="mRNA"/>
</dbReference>
<dbReference type="EMBL" id="X67615">
    <property type="protein sequence ID" value="CAA47875.1"/>
    <property type="molecule type" value="Genomic_DNA"/>
</dbReference>
<dbReference type="EMBL" id="X67614">
    <property type="protein sequence ID" value="CAA47874.1"/>
    <property type="molecule type" value="Genomic_DNA"/>
</dbReference>
<dbReference type="PIR" id="A25747">
    <property type="entry name" value="A25747"/>
</dbReference>
<dbReference type="PIR" id="S00840">
    <property type="entry name" value="S00840"/>
</dbReference>
<dbReference type="RefSeq" id="NP_001104739.1">
    <property type="nucleotide sequence ID" value="NM_001111269.2"/>
</dbReference>
<dbReference type="RefSeq" id="NP_001106694.1">
    <property type="nucleotide sequence ID" value="NM_001113223.2"/>
</dbReference>
<dbReference type="RefSeq" id="NP_001396284.1">
    <property type="nucleotide sequence ID" value="NM_001409355.1"/>
</dbReference>
<dbReference type="RefSeq" id="XP_008772023.1">
    <property type="nucleotide sequence ID" value="XM_008773801.1"/>
</dbReference>
<dbReference type="RefSeq" id="XP_017458001.1">
    <property type="nucleotide sequence ID" value="XM_017602512.1"/>
</dbReference>
<dbReference type="SMR" id="P11517"/>
<dbReference type="BioGRID" id="603888">
    <property type="interactions" value="1"/>
</dbReference>
<dbReference type="ComplexPortal" id="CPX-2926">
    <property type="entry name" value="Hemoglobin HbA complex, variant HBB2"/>
</dbReference>
<dbReference type="FunCoup" id="P11517">
    <property type="interactions" value="13"/>
</dbReference>
<dbReference type="IntAct" id="P11517">
    <property type="interactions" value="1"/>
</dbReference>
<dbReference type="MINT" id="P11517"/>
<dbReference type="STRING" id="10116.ENSRNOP00000069937"/>
<dbReference type="iPTMnet" id="P11517"/>
<dbReference type="PhosphoSitePlus" id="P11517"/>
<dbReference type="SwissPalm" id="P11517"/>
<dbReference type="jPOST" id="P11517"/>
<dbReference type="PaxDb" id="10116-ENSRNOP00000048546"/>
<dbReference type="Ensembl" id="ENSRNOT00000019913.7">
    <property type="protein sequence ID" value="ENSRNOP00000019914.5"/>
    <property type="gene ID" value="ENSRNOG00000047098.3"/>
</dbReference>
<dbReference type="Ensembl" id="ENSRNOT00000090745.2">
    <property type="protein sequence ID" value="ENSRNOP00000071528.1"/>
    <property type="gene ID" value="ENSRNOG00000047098.3"/>
</dbReference>
<dbReference type="GeneID" id="100134871"/>
<dbReference type="GeneID" id="120093065"/>
<dbReference type="GeneID" id="689064"/>
<dbReference type="KEGG" id="rno:100134871"/>
<dbReference type="KEGG" id="rno:689064"/>
<dbReference type="AGR" id="RGD:1597422"/>
<dbReference type="AGR" id="RGD:2290038"/>
<dbReference type="AGR" id="RGD:41201883"/>
<dbReference type="CTD" id="100134871"/>
<dbReference type="CTD" id="100503605"/>
<dbReference type="eggNOG" id="KOG3378">
    <property type="taxonomic scope" value="Eukaryota"/>
</dbReference>
<dbReference type="GeneTree" id="ENSGT00940000156216"/>
<dbReference type="HOGENOM" id="CLU_003827_10_0_1"/>
<dbReference type="InParanoid" id="P11517"/>
<dbReference type="OrthoDB" id="9886081at2759"/>
<dbReference type="TreeFam" id="TF333268"/>
<dbReference type="PRO" id="PR:P11517"/>
<dbReference type="Proteomes" id="UP000002494">
    <property type="component" value="Chromosome 1"/>
</dbReference>
<dbReference type="Bgee" id="ENSRNOG00000047098">
    <property type="expression patterns" value="Expressed in spleen and 19 other cell types or tissues"/>
</dbReference>
<dbReference type="ExpressionAtlas" id="P11517">
    <property type="expression patterns" value="baseline and differential"/>
</dbReference>
<dbReference type="GO" id="GO:0031838">
    <property type="term" value="C:haptoglobin-hemoglobin complex"/>
    <property type="evidence" value="ECO:0000318"/>
    <property type="project" value="GO_Central"/>
</dbReference>
<dbReference type="GO" id="GO:0005833">
    <property type="term" value="C:hemoglobin complex"/>
    <property type="evidence" value="ECO:0000250"/>
    <property type="project" value="ComplexPortal"/>
</dbReference>
<dbReference type="GO" id="GO:0020037">
    <property type="term" value="F:heme binding"/>
    <property type="evidence" value="ECO:0000318"/>
    <property type="project" value="GO_Central"/>
</dbReference>
<dbReference type="GO" id="GO:0031721">
    <property type="term" value="F:hemoglobin alpha binding"/>
    <property type="evidence" value="ECO:0000318"/>
    <property type="project" value="GO_Central"/>
</dbReference>
<dbReference type="GO" id="GO:0046872">
    <property type="term" value="F:metal ion binding"/>
    <property type="evidence" value="ECO:0007669"/>
    <property type="project" value="UniProtKB-KW"/>
</dbReference>
<dbReference type="GO" id="GO:0019825">
    <property type="term" value="F:oxygen binding"/>
    <property type="evidence" value="ECO:0000318"/>
    <property type="project" value="GO_Central"/>
</dbReference>
<dbReference type="GO" id="GO:0005344">
    <property type="term" value="F:oxygen carrier activity"/>
    <property type="evidence" value="ECO:0000318"/>
    <property type="project" value="GO_Central"/>
</dbReference>
<dbReference type="GO" id="GO:0015670">
    <property type="term" value="P:carbon dioxide transport"/>
    <property type="evidence" value="ECO:0000303"/>
    <property type="project" value="ComplexPortal"/>
</dbReference>
<dbReference type="GO" id="GO:0098869">
    <property type="term" value="P:cellular oxidant detoxification"/>
    <property type="evidence" value="ECO:0007669"/>
    <property type="project" value="GOC"/>
</dbReference>
<dbReference type="GO" id="GO:0042744">
    <property type="term" value="P:hydrogen peroxide catabolic process"/>
    <property type="evidence" value="ECO:0000318"/>
    <property type="project" value="GO_Central"/>
</dbReference>
<dbReference type="GO" id="GO:0030185">
    <property type="term" value="P:nitric oxide transport"/>
    <property type="evidence" value="ECO:0000266"/>
    <property type="project" value="ComplexPortal"/>
</dbReference>
<dbReference type="GO" id="GO:0015671">
    <property type="term" value="P:oxygen transport"/>
    <property type="evidence" value="ECO:0000266"/>
    <property type="project" value="ComplexPortal"/>
</dbReference>
<dbReference type="CDD" id="cd08925">
    <property type="entry name" value="Hb-beta-like"/>
    <property type="match status" value="1"/>
</dbReference>
<dbReference type="FunFam" id="1.10.490.10:FF:000001">
    <property type="entry name" value="Hemoglobin subunit beta"/>
    <property type="match status" value="1"/>
</dbReference>
<dbReference type="Gene3D" id="1.10.490.10">
    <property type="entry name" value="Globins"/>
    <property type="match status" value="1"/>
</dbReference>
<dbReference type="InterPro" id="IPR000971">
    <property type="entry name" value="Globin"/>
</dbReference>
<dbReference type="InterPro" id="IPR009050">
    <property type="entry name" value="Globin-like_sf"/>
</dbReference>
<dbReference type="InterPro" id="IPR012292">
    <property type="entry name" value="Globin/Proto"/>
</dbReference>
<dbReference type="InterPro" id="IPR002337">
    <property type="entry name" value="Hemoglobin_b"/>
</dbReference>
<dbReference type="InterPro" id="IPR050056">
    <property type="entry name" value="Hemoglobin_oxygen_transport"/>
</dbReference>
<dbReference type="PANTHER" id="PTHR11442">
    <property type="entry name" value="HEMOGLOBIN FAMILY MEMBER"/>
    <property type="match status" value="1"/>
</dbReference>
<dbReference type="PANTHER" id="PTHR11442:SF42">
    <property type="entry name" value="HEMOGLOBIN SUBUNIT BETA"/>
    <property type="match status" value="1"/>
</dbReference>
<dbReference type="Pfam" id="PF00042">
    <property type="entry name" value="Globin"/>
    <property type="match status" value="1"/>
</dbReference>
<dbReference type="PRINTS" id="PR00814">
    <property type="entry name" value="BETAHAEM"/>
</dbReference>
<dbReference type="SUPFAM" id="SSF46458">
    <property type="entry name" value="Globin-like"/>
    <property type="match status" value="1"/>
</dbReference>
<dbReference type="PROSITE" id="PS01033">
    <property type="entry name" value="GLOBIN"/>
    <property type="match status" value="1"/>
</dbReference>
<evidence type="ECO:0000250" key="1">
    <source>
        <dbReference type="UniProtKB" id="P02086"/>
    </source>
</evidence>
<evidence type="ECO:0000250" key="2">
    <source>
        <dbReference type="UniProtKB" id="P02089"/>
    </source>
</evidence>
<evidence type="ECO:0000250" key="3">
    <source>
        <dbReference type="UniProtKB" id="P02091"/>
    </source>
</evidence>
<evidence type="ECO:0000255" key="4">
    <source>
        <dbReference type="PROSITE-ProRule" id="PRU00238"/>
    </source>
</evidence>
<evidence type="ECO:0000269" key="5">
    <source ref="6"/>
</evidence>
<evidence type="ECO:0000305" key="6"/>
<evidence type="ECO:0007744" key="7">
    <source>
    </source>
</evidence>
<name>HBB2_RAT</name>